<name>TAL_NOSS1</name>
<sequence>MTKNLLEQLREMTVVVADTGDIQAIEKFTPRDATTNPSLITAAAKMPEYQEIVDQTLLQAKKDAGAGASKGQIVSLAFDRLAVSFGLKILQIIPGRVSTEVDARLSYDTEATITKARELIAQYKAAGIGPERVLIKIASTWEGIKAAEILEKEGIHCNLTLLFGLHQAIACAEAGITLISPFVGRILDWYKKETGRDSYPSAEDPGVLSVTTIYNYYKKFGYKTEVMGASFRNIGEITELAGSDLLTISPGLLGELQATIGELPRKLDPAKAATLDIDKISIDKATFDKMHAADRMAYDKLDEGIKGFTKALEELETLLAERLARLEVVASH</sequence>
<accession>P58561</accession>
<dbReference type="EC" id="2.2.1.2" evidence="1"/>
<dbReference type="EMBL" id="BA000019">
    <property type="protein sequence ID" value="BAB74262.1"/>
    <property type="molecule type" value="Genomic_DNA"/>
</dbReference>
<dbReference type="PIR" id="AD2126">
    <property type="entry name" value="AD2126"/>
</dbReference>
<dbReference type="RefSeq" id="WP_010996719.1">
    <property type="nucleotide sequence ID" value="NZ_RSCN01000002.1"/>
</dbReference>
<dbReference type="SMR" id="P58561"/>
<dbReference type="STRING" id="103690.gene:10494594"/>
<dbReference type="KEGG" id="ana:all2563"/>
<dbReference type="eggNOG" id="COG0176">
    <property type="taxonomic scope" value="Bacteria"/>
</dbReference>
<dbReference type="OrthoDB" id="9807051at2"/>
<dbReference type="UniPathway" id="UPA00115">
    <property type="reaction ID" value="UER00414"/>
</dbReference>
<dbReference type="Proteomes" id="UP000002483">
    <property type="component" value="Chromosome"/>
</dbReference>
<dbReference type="GO" id="GO:0005737">
    <property type="term" value="C:cytoplasm"/>
    <property type="evidence" value="ECO:0007669"/>
    <property type="project" value="UniProtKB-SubCell"/>
</dbReference>
<dbReference type="GO" id="GO:0004801">
    <property type="term" value="F:transaldolase activity"/>
    <property type="evidence" value="ECO:0000250"/>
    <property type="project" value="UniProtKB"/>
</dbReference>
<dbReference type="GO" id="GO:0005975">
    <property type="term" value="P:carbohydrate metabolic process"/>
    <property type="evidence" value="ECO:0007669"/>
    <property type="project" value="InterPro"/>
</dbReference>
<dbReference type="GO" id="GO:0006098">
    <property type="term" value="P:pentose-phosphate shunt"/>
    <property type="evidence" value="ECO:0007669"/>
    <property type="project" value="UniProtKB-UniRule"/>
</dbReference>
<dbReference type="CDD" id="cd00957">
    <property type="entry name" value="Transaldolase_TalAB"/>
    <property type="match status" value="1"/>
</dbReference>
<dbReference type="FunFam" id="3.20.20.70:FF:000002">
    <property type="entry name" value="Transaldolase"/>
    <property type="match status" value="1"/>
</dbReference>
<dbReference type="Gene3D" id="3.20.20.70">
    <property type="entry name" value="Aldolase class I"/>
    <property type="match status" value="1"/>
</dbReference>
<dbReference type="HAMAP" id="MF_00492">
    <property type="entry name" value="Transaldolase_1"/>
    <property type="match status" value="1"/>
</dbReference>
<dbReference type="InterPro" id="IPR013785">
    <property type="entry name" value="Aldolase_TIM"/>
</dbReference>
<dbReference type="InterPro" id="IPR001585">
    <property type="entry name" value="TAL/FSA"/>
</dbReference>
<dbReference type="InterPro" id="IPR004730">
    <property type="entry name" value="Transaldolase_1"/>
</dbReference>
<dbReference type="InterPro" id="IPR018225">
    <property type="entry name" value="Transaldolase_AS"/>
</dbReference>
<dbReference type="NCBIfam" id="NF008965">
    <property type="entry name" value="PRK12309.1"/>
    <property type="match status" value="1"/>
</dbReference>
<dbReference type="NCBIfam" id="TIGR00874">
    <property type="entry name" value="talAB"/>
    <property type="match status" value="1"/>
</dbReference>
<dbReference type="PANTHER" id="PTHR10683">
    <property type="entry name" value="TRANSALDOLASE"/>
    <property type="match status" value="1"/>
</dbReference>
<dbReference type="PANTHER" id="PTHR10683:SF18">
    <property type="entry name" value="TRANSALDOLASE"/>
    <property type="match status" value="1"/>
</dbReference>
<dbReference type="Pfam" id="PF00923">
    <property type="entry name" value="TAL_FSA"/>
    <property type="match status" value="1"/>
</dbReference>
<dbReference type="SUPFAM" id="SSF51569">
    <property type="entry name" value="Aldolase"/>
    <property type="match status" value="1"/>
</dbReference>
<dbReference type="PROSITE" id="PS01054">
    <property type="entry name" value="TRANSALDOLASE_1"/>
    <property type="match status" value="1"/>
</dbReference>
<dbReference type="PROSITE" id="PS00958">
    <property type="entry name" value="TRANSALDOLASE_2"/>
    <property type="match status" value="1"/>
</dbReference>
<gene>
    <name evidence="1" type="primary">tal</name>
    <name type="ordered locus">all2563</name>
</gene>
<reference key="1">
    <citation type="journal article" date="2001" name="DNA Res.">
        <title>Complete genomic sequence of the filamentous nitrogen-fixing cyanobacterium Anabaena sp. strain PCC 7120.</title>
        <authorList>
            <person name="Kaneko T."/>
            <person name="Nakamura Y."/>
            <person name="Wolk C.P."/>
            <person name="Kuritz T."/>
            <person name="Sasamoto S."/>
            <person name="Watanabe A."/>
            <person name="Iriguchi M."/>
            <person name="Ishikawa A."/>
            <person name="Kawashima K."/>
            <person name="Kimura T."/>
            <person name="Kishida Y."/>
            <person name="Kohara M."/>
            <person name="Matsumoto M."/>
            <person name="Matsuno A."/>
            <person name="Muraki A."/>
            <person name="Nakazaki N."/>
            <person name="Shimpo S."/>
            <person name="Sugimoto M."/>
            <person name="Takazawa M."/>
            <person name="Yamada M."/>
            <person name="Yasuda M."/>
            <person name="Tabata S."/>
        </authorList>
    </citation>
    <scope>NUCLEOTIDE SEQUENCE [LARGE SCALE GENOMIC DNA]</scope>
    <source>
        <strain>PCC 7120 / SAG 25.82 / UTEX 2576</strain>
    </source>
</reference>
<evidence type="ECO:0000255" key="1">
    <source>
        <dbReference type="HAMAP-Rule" id="MF_00492"/>
    </source>
</evidence>
<evidence type="ECO:0000305" key="2"/>
<organism>
    <name type="scientific">Nostoc sp. (strain PCC 7120 / SAG 25.82 / UTEX 2576)</name>
    <dbReference type="NCBI Taxonomy" id="103690"/>
    <lineage>
        <taxon>Bacteria</taxon>
        <taxon>Bacillati</taxon>
        <taxon>Cyanobacteriota</taxon>
        <taxon>Cyanophyceae</taxon>
        <taxon>Nostocales</taxon>
        <taxon>Nostocaceae</taxon>
        <taxon>Nostoc</taxon>
    </lineage>
</organism>
<proteinExistence type="inferred from homology"/>
<comment type="function">
    <text evidence="1">Transaldolase is important for the balance of metabolites in the pentose-phosphate pathway.</text>
</comment>
<comment type="catalytic activity">
    <reaction evidence="1">
        <text>D-sedoheptulose 7-phosphate + D-glyceraldehyde 3-phosphate = D-erythrose 4-phosphate + beta-D-fructose 6-phosphate</text>
        <dbReference type="Rhea" id="RHEA:17053"/>
        <dbReference type="ChEBI" id="CHEBI:16897"/>
        <dbReference type="ChEBI" id="CHEBI:57483"/>
        <dbReference type="ChEBI" id="CHEBI:57634"/>
        <dbReference type="ChEBI" id="CHEBI:59776"/>
        <dbReference type="EC" id="2.2.1.2"/>
    </reaction>
</comment>
<comment type="pathway">
    <text evidence="1">Carbohydrate degradation; pentose phosphate pathway; D-glyceraldehyde 3-phosphate and beta-D-fructose 6-phosphate from D-ribose 5-phosphate and D-xylulose 5-phosphate (non-oxidative stage): step 2/3.</text>
</comment>
<comment type="subcellular location">
    <subcellularLocation>
        <location evidence="1">Cytoplasm</location>
    </subcellularLocation>
</comment>
<comment type="similarity">
    <text evidence="1 2">Belongs to the transaldolase family. Type 1 subfamily.</text>
</comment>
<keyword id="KW-0963">Cytoplasm</keyword>
<keyword id="KW-0570">Pentose shunt</keyword>
<keyword id="KW-1185">Reference proteome</keyword>
<keyword id="KW-0704">Schiff base</keyword>
<keyword id="KW-0808">Transferase</keyword>
<feature type="chain" id="PRO_0000173577" description="Transaldolase">
    <location>
        <begin position="1"/>
        <end position="332"/>
    </location>
</feature>
<feature type="active site" description="Schiff-base intermediate with substrate" evidence="1">
    <location>
        <position position="136"/>
    </location>
</feature>
<protein>
    <recommendedName>
        <fullName evidence="1">Transaldolase</fullName>
        <ecNumber evidence="1">2.2.1.2</ecNumber>
    </recommendedName>
</protein>